<evidence type="ECO:0000255" key="1">
    <source>
        <dbReference type="HAMAP-Rule" id="MF_01187"/>
    </source>
</evidence>
<keyword id="KW-1185">Reference proteome</keyword>
<sequence>MDKELLAMLVCPRCQGKLKYDRERAELKCHFDGLAFPIEDEIPVMLEEQARHMDADEKLGKAPGEARDATS</sequence>
<reference key="1">
    <citation type="journal article" date="2011" name="Stand. Genomic Sci.">
        <title>Complete genome sequence of the halophilic and highly halotolerant Chromohalobacter salexigens type strain (1H11(T)).</title>
        <authorList>
            <person name="Copeland A."/>
            <person name="O'Connor K."/>
            <person name="Lucas S."/>
            <person name="Lapidus A."/>
            <person name="Berry K.W."/>
            <person name="Detter J.C."/>
            <person name="Del Rio T.G."/>
            <person name="Hammon N."/>
            <person name="Dalin E."/>
            <person name="Tice H."/>
            <person name="Pitluck S."/>
            <person name="Bruce D."/>
            <person name="Goodwin L."/>
            <person name="Han C."/>
            <person name="Tapia R."/>
            <person name="Saunders E."/>
            <person name="Schmutz J."/>
            <person name="Brettin T."/>
            <person name="Larimer F."/>
            <person name="Land M."/>
            <person name="Hauser L."/>
            <person name="Vargas C."/>
            <person name="Nieto J.J."/>
            <person name="Kyrpides N.C."/>
            <person name="Ivanova N."/>
            <person name="Goker M."/>
            <person name="Klenk H.P."/>
            <person name="Csonka L.N."/>
            <person name="Woyke T."/>
        </authorList>
    </citation>
    <scope>NUCLEOTIDE SEQUENCE [LARGE SCALE GENOMIC DNA]</scope>
    <source>
        <strain>ATCC BAA-138 / DSM 3043 / CIP 106854 / NCIMB 13768 / 1H11</strain>
    </source>
</reference>
<protein>
    <recommendedName>
        <fullName evidence="1">UPF0434 protein Csal_1588</fullName>
    </recommendedName>
</protein>
<feature type="chain" id="PRO_0000291082" description="UPF0434 protein Csal_1588">
    <location>
        <begin position="1"/>
        <end position="71"/>
    </location>
</feature>
<organism>
    <name type="scientific">Chromohalobacter salexigens (strain ATCC BAA-138 / DSM 3043 / CIP 106854 / NCIMB 13768 / 1H11)</name>
    <dbReference type="NCBI Taxonomy" id="290398"/>
    <lineage>
        <taxon>Bacteria</taxon>
        <taxon>Pseudomonadati</taxon>
        <taxon>Pseudomonadota</taxon>
        <taxon>Gammaproteobacteria</taxon>
        <taxon>Oceanospirillales</taxon>
        <taxon>Halomonadaceae</taxon>
        <taxon>Chromohalobacter</taxon>
    </lineage>
</organism>
<gene>
    <name type="ordered locus">Csal_1588</name>
</gene>
<name>Y1588_CHRSD</name>
<comment type="similarity">
    <text evidence="1">Belongs to the UPF0434 family.</text>
</comment>
<accession>Q1QX67</accession>
<dbReference type="EMBL" id="CP000285">
    <property type="protein sequence ID" value="ABE58941.1"/>
    <property type="molecule type" value="Genomic_DNA"/>
</dbReference>
<dbReference type="RefSeq" id="WP_011506887.1">
    <property type="nucleotide sequence ID" value="NC_007963.1"/>
</dbReference>
<dbReference type="SMR" id="Q1QX67"/>
<dbReference type="STRING" id="290398.Csal_1588"/>
<dbReference type="GeneID" id="95334319"/>
<dbReference type="KEGG" id="csa:Csal_1588"/>
<dbReference type="eggNOG" id="COG2835">
    <property type="taxonomic scope" value="Bacteria"/>
</dbReference>
<dbReference type="HOGENOM" id="CLU_155659_3_0_6"/>
<dbReference type="OrthoDB" id="9812205at2"/>
<dbReference type="Proteomes" id="UP000000239">
    <property type="component" value="Chromosome"/>
</dbReference>
<dbReference type="GO" id="GO:0005829">
    <property type="term" value="C:cytosol"/>
    <property type="evidence" value="ECO:0007669"/>
    <property type="project" value="TreeGrafter"/>
</dbReference>
<dbReference type="FunFam" id="2.20.25.10:FF:000002">
    <property type="entry name" value="UPF0434 protein YcaR"/>
    <property type="match status" value="1"/>
</dbReference>
<dbReference type="Gene3D" id="2.20.25.10">
    <property type="match status" value="1"/>
</dbReference>
<dbReference type="HAMAP" id="MF_01187">
    <property type="entry name" value="UPF0434"/>
    <property type="match status" value="1"/>
</dbReference>
<dbReference type="InterPro" id="IPR005651">
    <property type="entry name" value="Trm112-like"/>
</dbReference>
<dbReference type="PANTHER" id="PTHR33505:SF4">
    <property type="entry name" value="PROTEIN PREY, MITOCHONDRIAL"/>
    <property type="match status" value="1"/>
</dbReference>
<dbReference type="PANTHER" id="PTHR33505">
    <property type="entry name" value="ZGC:162634"/>
    <property type="match status" value="1"/>
</dbReference>
<dbReference type="Pfam" id="PF03966">
    <property type="entry name" value="Trm112p"/>
    <property type="match status" value="1"/>
</dbReference>
<dbReference type="SUPFAM" id="SSF158997">
    <property type="entry name" value="Trm112p-like"/>
    <property type="match status" value="1"/>
</dbReference>
<proteinExistence type="inferred from homology"/>